<organism>
    <name type="scientific">Vibrio vulnificus (strain CMCP6)</name>
    <dbReference type="NCBI Taxonomy" id="216895"/>
    <lineage>
        <taxon>Bacteria</taxon>
        <taxon>Pseudomonadati</taxon>
        <taxon>Pseudomonadota</taxon>
        <taxon>Gammaproteobacteria</taxon>
        <taxon>Vibrionales</taxon>
        <taxon>Vibrionaceae</taxon>
        <taxon>Vibrio</taxon>
    </lineage>
</organism>
<dbReference type="EC" id="3.5.2.9" evidence="1"/>
<dbReference type="EMBL" id="AE016796">
    <property type="protein sequence ID" value="AAO07238.2"/>
    <property type="molecule type" value="Genomic_DNA"/>
</dbReference>
<dbReference type="SMR" id="Q8D788"/>
<dbReference type="KEGG" id="vvu:VV2_0273"/>
<dbReference type="HOGENOM" id="CLU_069535_0_0_6"/>
<dbReference type="Proteomes" id="UP000002275">
    <property type="component" value="Chromosome 2"/>
</dbReference>
<dbReference type="GO" id="GO:0017168">
    <property type="term" value="F:5-oxoprolinase (ATP-hydrolyzing) activity"/>
    <property type="evidence" value="ECO:0007669"/>
    <property type="project" value="UniProtKB-UniRule"/>
</dbReference>
<dbReference type="GO" id="GO:0005524">
    <property type="term" value="F:ATP binding"/>
    <property type="evidence" value="ECO:0007669"/>
    <property type="project" value="UniProtKB-UniRule"/>
</dbReference>
<dbReference type="GO" id="GO:0005975">
    <property type="term" value="P:carbohydrate metabolic process"/>
    <property type="evidence" value="ECO:0007669"/>
    <property type="project" value="InterPro"/>
</dbReference>
<dbReference type="CDD" id="cd10787">
    <property type="entry name" value="LamB_YcsF_like"/>
    <property type="match status" value="1"/>
</dbReference>
<dbReference type="Gene3D" id="3.20.20.370">
    <property type="entry name" value="Glycoside hydrolase/deacetylase"/>
    <property type="match status" value="1"/>
</dbReference>
<dbReference type="HAMAP" id="MF_00691">
    <property type="entry name" value="PxpA"/>
    <property type="match status" value="1"/>
</dbReference>
<dbReference type="InterPro" id="IPR011330">
    <property type="entry name" value="Glyco_hydro/deAcase_b/a-brl"/>
</dbReference>
<dbReference type="InterPro" id="IPR005501">
    <property type="entry name" value="LamB/YcsF/PxpA-like"/>
</dbReference>
<dbReference type="NCBIfam" id="NF003814">
    <property type="entry name" value="PRK05406.1-3"/>
    <property type="match status" value="1"/>
</dbReference>
<dbReference type="NCBIfam" id="NF003816">
    <property type="entry name" value="PRK05406.1-5"/>
    <property type="match status" value="1"/>
</dbReference>
<dbReference type="PANTHER" id="PTHR30292:SF0">
    <property type="entry name" value="5-OXOPROLINASE SUBUNIT A"/>
    <property type="match status" value="1"/>
</dbReference>
<dbReference type="PANTHER" id="PTHR30292">
    <property type="entry name" value="UNCHARACTERIZED PROTEIN YBGL-RELATED"/>
    <property type="match status" value="1"/>
</dbReference>
<dbReference type="Pfam" id="PF03746">
    <property type="entry name" value="LamB_YcsF"/>
    <property type="match status" value="1"/>
</dbReference>
<dbReference type="SUPFAM" id="SSF88713">
    <property type="entry name" value="Glycoside hydrolase/deacetylase"/>
    <property type="match status" value="1"/>
</dbReference>
<sequence length="247" mass="27363">MNKQRVTLNCDMGESFGNWKMGSDELVMPWVDMANIACGFHASDPSVMSKTVALAKHYKVKIGAHPGYQDLVGFGRRSIPHTPAQISEIVLYQVGALKAVCQYHDVPLHYVKPHGALYNDMMESEAIFRAICEAVSIFGIPLMILATSDNQHYLDIADIYDVPLLFEAFADRQYQEDGKLTPRSQANAVYHQPEDIYNQALQIATYGSVNTANGTRLSLEADTICVHGDNPESIALVQRISQAIAKM</sequence>
<gene>
    <name evidence="1" type="primary">pxpA</name>
    <name type="ordered locus">VV2_0273</name>
</gene>
<comment type="function">
    <text evidence="1">Catalyzes the cleavage of 5-oxoproline to form L-glutamate coupled to the hydrolysis of ATP to ADP and inorganic phosphate.</text>
</comment>
<comment type="catalytic activity">
    <reaction evidence="1">
        <text>5-oxo-L-proline + ATP + 2 H2O = L-glutamate + ADP + phosphate + H(+)</text>
        <dbReference type="Rhea" id="RHEA:10348"/>
        <dbReference type="ChEBI" id="CHEBI:15377"/>
        <dbReference type="ChEBI" id="CHEBI:15378"/>
        <dbReference type="ChEBI" id="CHEBI:29985"/>
        <dbReference type="ChEBI" id="CHEBI:30616"/>
        <dbReference type="ChEBI" id="CHEBI:43474"/>
        <dbReference type="ChEBI" id="CHEBI:58402"/>
        <dbReference type="ChEBI" id="CHEBI:456216"/>
        <dbReference type="EC" id="3.5.2.9"/>
    </reaction>
</comment>
<comment type="subunit">
    <text evidence="1">Forms a complex composed of PxpA, PxpB and PxpC.</text>
</comment>
<comment type="similarity">
    <text evidence="1">Belongs to the LamB/PxpA family.</text>
</comment>
<feature type="chain" id="PRO_0000185060" description="5-oxoprolinase subunit A">
    <location>
        <begin position="1"/>
        <end position="247"/>
    </location>
</feature>
<proteinExistence type="inferred from homology"/>
<accession>Q8D788</accession>
<reference key="1">
    <citation type="submission" date="2002-12" db="EMBL/GenBank/DDBJ databases">
        <title>Complete genome sequence of Vibrio vulnificus CMCP6.</title>
        <authorList>
            <person name="Rhee J.H."/>
            <person name="Kim S.Y."/>
            <person name="Chung S.S."/>
            <person name="Kim J.J."/>
            <person name="Moon Y.H."/>
            <person name="Jeong H."/>
            <person name="Choy H.E."/>
        </authorList>
    </citation>
    <scope>NUCLEOTIDE SEQUENCE [LARGE SCALE GENOMIC DNA]</scope>
    <source>
        <strain>CMCP6</strain>
    </source>
</reference>
<name>PXPA_VIBVU</name>
<keyword id="KW-0067">ATP-binding</keyword>
<keyword id="KW-0378">Hydrolase</keyword>
<keyword id="KW-0547">Nucleotide-binding</keyword>
<evidence type="ECO:0000255" key="1">
    <source>
        <dbReference type="HAMAP-Rule" id="MF_00691"/>
    </source>
</evidence>
<protein>
    <recommendedName>
        <fullName evidence="1">5-oxoprolinase subunit A</fullName>
        <shortName evidence="1">5-OPase subunit A</shortName>
        <ecNumber evidence="1">3.5.2.9</ecNumber>
    </recommendedName>
    <alternativeName>
        <fullName evidence="1">5-oxoprolinase (ATP-hydrolyzing) subunit A</fullName>
    </alternativeName>
</protein>